<accession>Q54XB0</accession>
<name>MED22_DICDI</name>
<organism>
    <name type="scientific">Dictyostelium discoideum</name>
    <name type="common">Social amoeba</name>
    <dbReference type="NCBI Taxonomy" id="44689"/>
    <lineage>
        <taxon>Eukaryota</taxon>
        <taxon>Amoebozoa</taxon>
        <taxon>Evosea</taxon>
        <taxon>Eumycetozoa</taxon>
        <taxon>Dictyostelia</taxon>
        <taxon>Dictyosteliales</taxon>
        <taxon>Dictyosteliaceae</taxon>
        <taxon>Dictyostelium</taxon>
    </lineage>
</organism>
<evidence type="ECO:0000250" key="1"/>
<evidence type="ECO:0000305" key="2"/>
<reference key="1">
    <citation type="journal article" date="2005" name="Nature">
        <title>The genome of the social amoeba Dictyostelium discoideum.</title>
        <authorList>
            <person name="Eichinger L."/>
            <person name="Pachebat J.A."/>
            <person name="Gloeckner G."/>
            <person name="Rajandream M.A."/>
            <person name="Sucgang R."/>
            <person name="Berriman M."/>
            <person name="Song J."/>
            <person name="Olsen R."/>
            <person name="Szafranski K."/>
            <person name="Xu Q."/>
            <person name="Tunggal B."/>
            <person name="Kummerfeld S."/>
            <person name="Madera M."/>
            <person name="Konfortov B.A."/>
            <person name="Rivero F."/>
            <person name="Bankier A.T."/>
            <person name="Lehmann R."/>
            <person name="Hamlin N."/>
            <person name="Davies R."/>
            <person name="Gaudet P."/>
            <person name="Fey P."/>
            <person name="Pilcher K."/>
            <person name="Chen G."/>
            <person name="Saunders D."/>
            <person name="Sodergren E.J."/>
            <person name="Davis P."/>
            <person name="Kerhornou A."/>
            <person name="Nie X."/>
            <person name="Hall N."/>
            <person name="Anjard C."/>
            <person name="Hemphill L."/>
            <person name="Bason N."/>
            <person name="Farbrother P."/>
            <person name="Desany B."/>
            <person name="Just E."/>
            <person name="Morio T."/>
            <person name="Rost R."/>
            <person name="Churcher C.M."/>
            <person name="Cooper J."/>
            <person name="Haydock S."/>
            <person name="van Driessche N."/>
            <person name="Cronin A."/>
            <person name="Goodhead I."/>
            <person name="Muzny D.M."/>
            <person name="Mourier T."/>
            <person name="Pain A."/>
            <person name="Lu M."/>
            <person name="Harper D."/>
            <person name="Lindsay R."/>
            <person name="Hauser H."/>
            <person name="James K.D."/>
            <person name="Quiles M."/>
            <person name="Madan Babu M."/>
            <person name="Saito T."/>
            <person name="Buchrieser C."/>
            <person name="Wardroper A."/>
            <person name="Felder M."/>
            <person name="Thangavelu M."/>
            <person name="Johnson D."/>
            <person name="Knights A."/>
            <person name="Loulseged H."/>
            <person name="Mungall K.L."/>
            <person name="Oliver K."/>
            <person name="Price C."/>
            <person name="Quail M.A."/>
            <person name="Urushihara H."/>
            <person name="Hernandez J."/>
            <person name="Rabbinowitsch E."/>
            <person name="Steffen D."/>
            <person name="Sanders M."/>
            <person name="Ma J."/>
            <person name="Kohara Y."/>
            <person name="Sharp S."/>
            <person name="Simmonds M.N."/>
            <person name="Spiegler S."/>
            <person name="Tivey A."/>
            <person name="Sugano S."/>
            <person name="White B."/>
            <person name="Walker D."/>
            <person name="Woodward J.R."/>
            <person name="Winckler T."/>
            <person name="Tanaka Y."/>
            <person name="Shaulsky G."/>
            <person name="Schleicher M."/>
            <person name="Weinstock G.M."/>
            <person name="Rosenthal A."/>
            <person name="Cox E.C."/>
            <person name="Chisholm R.L."/>
            <person name="Gibbs R.A."/>
            <person name="Loomis W.F."/>
            <person name="Platzer M."/>
            <person name="Kay R.R."/>
            <person name="Williams J.G."/>
            <person name="Dear P.H."/>
            <person name="Noegel A.A."/>
            <person name="Barrell B.G."/>
            <person name="Kuspa A."/>
        </authorList>
    </citation>
    <scope>NUCLEOTIDE SEQUENCE [LARGE SCALE GENOMIC DNA]</scope>
    <source>
        <strain>AX4</strain>
    </source>
</reference>
<reference key="2">
    <citation type="journal article" date="2008" name="Nucleic Acids Res.">
        <title>Comparative genomics supports a deep evolutionary origin for the large, four-module transcriptional mediator complex.</title>
        <authorList>
            <person name="Bourbon H.-M."/>
        </authorList>
    </citation>
    <scope>NOMENCLATURE</scope>
</reference>
<keyword id="KW-0010">Activator</keyword>
<keyword id="KW-0539">Nucleus</keyword>
<keyword id="KW-1185">Reference proteome</keyword>
<keyword id="KW-0804">Transcription</keyword>
<keyword id="KW-0805">Transcription regulation</keyword>
<proteinExistence type="inferred from homology"/>
<comment type="function">
    <text evidence="1">Component of the Mediator complex, a coactivator involved in the regulated transcription of nearly all RNA polymerase II-dependent genes. Mediator functions as a bridge to convey information from gene-specific regulatory proteins to the basal RNA polymerase II transcription machinery. Mediator is recruited to promoters by direct interactions with regulatory proteins and serves as a scaffold for the assembly of a functional preinitiation complex with RNA polymerase II and the general transcription factors (By similarity).</text>
</comment>
<comment type="subunit">
    <text evidence="1">Component of the Mediator complex.</text>
</comment>
<comment type="subcellular location">
    <subcellularLocation>
        <location evidence="1">Nucleus</location>
    </subcellularLocation>
</comment>
<comment type="similarity">
    <text evidence="2">Belongs to the Mediator complex subunit 22 family.</text>
</comment>
<dbReference type="EMBL" id="AAFI02000027">
    <property type="protein sequence ID" value="EAL67882.1"/>
    <property type="molecule type" value="Genomic_DNA"/>
</dbReference>
<dbReference type="RefSeq" id="XP_641857.1">
    <property type="nucleotide sequence ID" value="XM_636765.1"/>
</dbReference>
<dbReference type="SMR" id="Q54XB0"/>
<dbReference type="FunCoup" id="Q54XB0">
    <property type="interactions" value="304"/>
</dbReference>
<dbReference type="STRING" id="44689.Q54XB0"/>
<dbReference type="PaxDb" id="44689-DDB0266933"/>
<dbReference type="EnsemblProtists" id="EAL67882">
    <property type="protein sequence ID" value="EAL67882"/>
    <property type="gene ID" value="DDB_G0279087"/>
</dbReference>
<dbReference type="GeneID" id="8621863"/>
<dbReference type="KEGG" id="ddi:DDB_G0279087"/>
<dbReference type="dictyBase" id="DDB_G0279087">
    <property type="gene designation" value="med22"/>
</dbReference>
<dbReference type="VEuPathDB" id="AmoebaDB:DDB_G0279087"/>
<dbReference type="eggNOG" id="KOG3304">
    <property type="taxonomic scope" value="Eukaryota"/>
</dbReference>
<dbReference type="HOGENOM" id="CLU_117242_1_0_1"/>
<dbReference type="InParanoid" id="Q54XB0"/>
<dbReference type="OMA" id="KQAECDQ"/>
<dbReference type="PhylomeDB" id="Q54XB0"/>
<dbReference type="PRO" id="PR:Q54XB0"/>
<dbReference type="Proteomes" id="UP000002195">
    <property type="component" value="Chromosome 3"/>
</dbReference>
<dbReference type="GO" id="GO:0070847">
    <property type="term" value="C:core mediator complex"/>
    <property type="evidence" value="ECO:0000250"/>
    <property type="project" value="dictyBase"/>
</dbReference>
<dbReference type="GO" id="GO:0016592">
    <property type="term" value="C:mediator complex"/>
    <property type="evidence" value="ECO:0000318"/>
    <property type="project" value="GO_Central"/>
</dbReference>
<dbReference type="GO" id="GO:0003712">
    <property type="term" value="F:transcription coregulator activity"/>
    <property type="evidence" value="ECO:0007669"/>
    <property type="project" value="InterPro"/>
</dbReference>
<dbReference type="GO" id="GO:0045944">
    <property type="term" value="P:positive regulation of transcription by RNA polymerase II"/>
    <property type="evidence" value="ECO:0000250"/>
    <property type="project" value="dictyBase"/>
</dbReference>
<dbReference type="InterPro" id="IPR009332">
    <property type="entry name" value="Med22"/>
</dbReference>
<dbReference type="PANTHER" id="PTHR12434">
    <property type="entry name" value="MEDIATOR OF RNA POLYMERASE II TRANSCRIPTION SUBUNIT 22"/>
    <property type="match status" value="1"/>
</dbReference>
<dbReference type="PANTHER" id="PTHR12434:SF6">
    <property type="entry name" value="MEDIATOR OF RNA POLYMERASE II TRANSCRIPTION SUBUNIT 22"/>
    <property type="match status" value="1"/>
</dbReference>
<dbReference type="Pfam" id="PF06179">
    <property type="entry name" value="Med22"/>
    <property type="match status" value="1"/>
</dbReference>
<protein>
    <recommendedName>
        <fullName>Putative mediator of RNA polymerase II transcription subunit 22</fullName>
    </recommendedName>
    <alternativeName>
        <fullName>Putative mediator complex subunit 22</fullName>
    </alternativeName>
</protein>
<sequence length="149" mass="17283">MNTGGNNSLPPQTRGEVLFRDQQFFQKQIDSKIMQLLENYHNIIKISKVNDPLKNASEIYEMETRTSNMLNAGEGLLKIIEELKQNLILNDFSTMAEEVRIQNLVFHKENERTNKSIKLISEELSRSLKELEDEYYNSSYKLPPPSSSK</sequence>
<feature type="chain" id="PRO_0000388659" description="Putative mediator of RNA polymerase II transcription subunit 22">
    <location>
        <begin position="1"/>
        <end position="149"/>
    </location>
</feature>
<gene>
    <name type="primary">med22</name>
    <name type="ORF">DDB_G0279087</name>
</gene>